<accession>A0A348AXX4</accession>
<sequence>MASDINTHPEGATKFWQQHFDGLNASVFPALSSHLTVPRPNAQTAHRISYSTLAKQKWDNTSLCRAALAILLARYSNASEALFGVLVEQFLPSNGEQASTEESPQSILPIRIRLDLEEAGLGLLQAINTLDASLREWKHIGLDAIRGTGEYGSAGCEFQTVLAVTTGKTPRTHRLASCTDRALLLDCRMDDDSATLLARYDPSVIDDLQVARFLKQLGHVIEQLRVQAVDLPLWELGIVTQEDSAEIQKWNSQQLQFSQECIHDVFANRVVDTPQKIAVSAWNGELTFAELDSFSSCLAQHIQSLELGDAKAIPLCFEKSKWAIVGMLGVLKAGRAFTLIDPSNPPARARQICRQTAATISIASPYQCDMMRALVPDCIVVDDDFFKSLAFDTDQFQPTATPQTLAYILFTSGSTGEPKGSMMEHHGFVSCCLEFGAALGINSNTRALQFASYAFGACLLEILTTLMHGGTVCIPSDDERINDAPGFIRRANVNWAILTPSFIGAIQPTTVPNLKTLVLVGEAMPSDIRDVWASHVQLKNAYGQSESATICSVTEVTPATVEAHNIGHAVGARFWITDPNNPNKLAPIGCVGELLVESPGIARGYLIPLPADATPFIDTLPDWYPRTQPLDNFKFYRTGDLVCYRSDGTVVYLGRRDSQIKIRGQRVEIGEVETCLRQQLPSQLVPVVEAVSLSGMSKSMTLIAFLVGENTILEEDVYVLEGSAAQRISSKLRQIVPGYCIPSHYIRINHLPTTATGKCDRKALRAIGTKLLREAVEGMASQEEQESASLMTEGITLERIWFQSLGLKPNSTRHKSNFFNLGGDSIAAIRMVNMARAAGLLLSISDIFQNPSLAGLINVMQQSSTAQDAIPATEYSGPVEQSFAQGRLWFLDQLTTGASWYLMPLAVRIHGPLRVQALSSALHALEQRHETLRTTFEQQDGMGVQIVHPSSKRELRVIDVSGKQNGGYDQVLKREQTTPIDLAKEPGWRAALLRVGDDEHILSIVIHHIIYDGWSLGVLREELGDLYAAALRGPDPLAHMAPLPIQYRDFSVWQKQPQQVAQHQQQLVYWTKQLEDSAPAELLTDFPRPAELSGRAGEVRFTIEGSVFDSLLAFRRVHQTTSFAVLLAVFRAAHYRLTGTEDATIGTPIANRTRAEVEKLIGFFVNTQCMRIAVADDDTFASLVSQVWSVATAAFEHQDVPFERIVSALLPGARDTSRNPLAQLLFALHLEQDLDKINLEGLACETVPTPMATRFDVEFHLFQEDDRLNGVVNFSTDLFEPQTIHSLVSVFQEILRRGLDQPQTPIAHLQLTDGLEELRNAGLLDIKRIDYPREASVVDMFQKQVAACPNVTAVKDSTSQLTYAQLDQESDKIAVWLRKRNIPAETLIALLAPRSCDSVAAFLGILKANLAYLPLDVNVPAARIEAILSTVAGHKLVLLGRDVPLLGTQLADLELVRIGEALRGSSSGSVAADKAIRPTATSLAYVIFTSGSTGQPKGIMVPHRSLVNVIKQRPAYGNVAHMTNLAFDPSLFEMCTALFNGNTLICIDTLVALDATQLPTIFKQEAIRVAMMTPALLTRLLAQATDALHELEALYVLGDRFPPKDAARASELVKTAVYNAYGPSENSICTTLFHAATGAMCTNGVPVGRVINNSGVYVMDPKQSLVSYGVMGELVVAGEGLAIGYTKPELNEGRFLTLTMDGKPVRAFRTGDRVRYRPTDGQLEFFGRMDFQIKIRGHRVELAEVERVLNRHPAIKDAITLLRQHGSSAQDTELVSFIVLGEQKPVKPHRNATDHGGMEIEQLDQKLEANLRAMMQATLPSYMVPSRIIVLDHMPLDKNGKVDRRGLTGLTLSPAMETSSRVVVAARNEIEAVLCEEFAHILGVEIGVTDNFFDLGGHSLMATTLAARLARRLNASISVKDVFDQPIVANLAATIKRGSTPHNAIPPTKYSGPVEQSFAQGRLWFLDQLNLGAAWYHMPLAVRLRGPLHLEALTAALHALEERHETLRTVFEEQDGVGMQIVRPSSKTPLRIIDVSTKERGYAELLKQEQTTPFDLATELGWRVALLRQGKDDHILSIVIHHIISDGWSLDILCEELGQFYAAVLRGQDPLAQISPLPIQYRDFSLWQKQPEQVAEHHRQLEYWTTQLEGSVPAELLTDLPRPTIQSGKAGVIPITVNGPVYERLRAFSRAHQTTAFAVLLAAFRATHYRLSGVADATIGTPIANRNRPELENMIGFFVNAQCMRITVEQDDTFETLVRQIRFTATAAFANQDVPFEHIVSALMPDSRDTSRNPLVQLMFALHAYKDLGKIELEGYVAEPVHTTLSTRFDLEFHMFQETNHLSGYVLYATDLFEPESIEGMVSIFKEILARALDQPQTPLALLPLTDGLAELRRRGLLEIERPSYPRESSVVDVFCSQVAASPNATAVKDSISQLTYAQLNEQSDKVAAWLHQCNLPTETLVAVLAPRSCQTVVAFLGILKANLAYLPLDVNVPAARIEAILSEVSGHILVLLGSHVSAPKIELADVEFVKIDNTVEHNLPGRIGSAPSATSLAYVIFTSGSTGKPKGVKVEHRGIVRLVKESNVVAKMPQAARIAHLSNIAFDAATWELYAALLNGGTLVCINYLTTLDSKALEAVFEQEKIQAAMLPPALLKQYLVNIPAAIGALEVVLVAGDRFDRRDAAATQALVGAGVYNAYGPTENTTLSTIYNVVQGDANVNGVPIGRPVSNSGAYIMNMNQELVPIGVIGELVVVGDGVARGYTDPALDVNRFVNVTIEGQTMRAYRTGDRARYRPKDAQIEFFGRMDQQIKIRGHRIEPAEVEHALLNNDLLQDAAVIIRKQQNDELEMVAFVEANSNKSIEQEASNQVEDWGAQFESNVYAEIEAIDASAVGNDFMGWTSMYDGSAIDKAEMQEWLDDTMQTILDGRPAGRVLEIGTGTGMILFNLGEGLQSYVGLEPSTSAAAFVNRRIQTLPAFAGKAEVHVGTATDISQLQDLRPEVVVINSVAQYFPSPEYLSKVLYALAQIPGVKRLFFGDMRSYAINDQFLAARALHNIGSKATKSAIRSKMVDLENSEEELLVDPTFFTNLATELPEVEHVEILPKRMQATNELSAYRYAAVVHIRDSSERAQTVHAIKSSAWVDFSKSQMDRKALISLLQSSVNTEAVAIGNIPYSKTIMARHVVQSLDEDNADKDIAQDKPDKPTWISAVRSNAEHCPSLSALDLVQLGEEAGFCVELSWAQQRSHHGAIDAVFHHYQPAREGSRVLFQFPTDTYRRQSGPLTNRPLQRIQSRRMETQVREKLRAVLPSYMIPSLIVLVDQMPLNPNGKVDRKALERRAQAVLRVEKPTSERVGARNETEAVLCEEFTDVLGLEVGITDNFFDLGGHSLMATKLAARISRRLDARVSVKDVFDQPVIVDLAASIRRGSTPHNPITPTEYSGPVEQSFAQGRLWFLDQLNLGASLYLMPLALRLRGPLRIDALTAALFALEQRHETLRTVFKEQDGVGIQIIQPSQKKKLRTIDVSAGDFSEALHHERTAPFDLASEPGFRVALLQLEPSDHVLSIVMHHIIYDGWSIDILCQELGQFYAAAIQGQDPLGQVSPLPIQYRDFSVWQKQPEQVAEHERQLAYWIDQLADSAPAEFLVDLPRPPVLSGDAGLVHLTIDGPIYDRLRAFCRVHQTTTFAVLLAAFRATHYRLTGAEDATVGTPIANRNRPELENLVGFFVNTQCMRISVGDDDTFEQLVRQVRSTATAAFANQDVPFERIVSTLLPGSRDTARNPLVQLMFAVHSLKDLGKIQFEGLVGETIPTASFTRFDVEFHLFQEVGRLSGNVLFSTDLFEPETIQGMVSVFMEILRGALDQPQIPIAVLPLTDGLTELRNRGLLEVEQPQYPRDSSVIDVFRAQVVACPDAIAVKDSTSQLTYAQLDEQSDEVAVWLHQRKLPAESLVAVLAPRSCETIITFFGILKANLAYLPLDINVPAARIQAILSSVAGKKILLLGSDQAQPEIRLDDVEFVQINETIDHNMAKDNTTRSGPLATSLAYVIFTSGSTGQPKGVKVEHRGIVRLVKNSNVVAKMPEAACVAHLSNLAFDAATWEIYAALLNGGSLICIDYFTTLDSKVLEAVFEREQIRAAMFPPALLKQCLLNIPTTISALDVILAAGDRFDRRDAIAAQALVGGGVYNAYGPTENTTLSTIYNVVDGDTNVNGIPIGLPVSNSGVYVMDPNQQLVPLGVMGELVVVGDGVARGYTDPALDVDRFIKVEIDGQIVRAYRTGDRVRHRPKDGQIEFFGRMDQQVKIRGHRIELAEVEHVILDNSLVQDAAVIVHKQADQEIEMIAFAIVRGDNDSKHPEKDILDRVKALLPSYMVPAQMVLLNSMPLNANGKVDRKELAKRAGTVPRSEMAYVAPERVPPRNEIETILCEEYAEVLGVEVGVMDNFFDLGGHSLMATKLAARATRRLDAKLSVKDIFDYPILANLAAAVQRGSTPHNAILATTYSGPVEQSFAQGRLWFLDQLNVGSNWYLQPIAIRIRGSLNINALTTALHALEQRHETLRTTFEEEDGVGMQVVQEYDPIELRIMDIAADYDGDYTEALKGEQTTPFDLESEPGWRVSLLRMNDNDHILSLVLHHIISDGWSVDVLRQELKQFYAAALQGLDPLSGADPLPIQYRDFSLWQKQPEQVAEHERQLKYWVEQLADNSPATLLADRPRPSVLSGQAGSVPLSIEGQVYEKLQAFCRAHQTTSFSVLLAAFRAAHFRLTGVDDATIGIPIANRNRPELEHLIGFFVNRQCMRITVGEDDTFESLIRQVHSTATAAYANQDVPFERIVSSLLSGSRDTSRNPLVQLVFAVHSQKNLGKFELQDLTSEPVAGAISTRFDAEFHLFQEEERLNGVVYYATDLFDAETIQGVVSVFQEILRRGLNHPRTPIAALSLTDGLDNLRKMNLVHFKRTDYPRDSSMVDIFREQVATYPDVIAVKDSTLQLTYAQLDQQSDEIATWLRNKKMAPETLVGVLAPRSCQTIVAFLGVLKANLAYLPLDVNAPMARVETIMSSVPGSKLLLLGSDVPAQEIQLQNVELVRIEDTLGHAASAGTATTEPSPTSLAYVIFTSGSTGKPKGVMVEHRSVIRLVRKESNSMSKMSSRARVAHLTNIAFDVSAWEVYATLLNGGTLVCVDYFTSFDAKALGLLFEREQITAAMITPTLLKQCITIVPEALRKLSVLYTGGDRFDRRDAIATKALVKGPVYNAWGPTETTIVSTIYELADDDQFTNGVPIGKAVSNSWAYVMDLNQQLVPVGVMGEAVVIGDGLARGYTDPALDCNRFVHITIDGKRVRAYRTGDRARYRPKDGEIEFFGRMDRQLKIRGHRIEPAEIEHAMLGHNDIVDVAIVTRHQDGAGLEMVAFVTAHTNKSIERNEATNQVAGWGDHFESSTYAELDTLVKSDVGKDFVGWTNMYDGGAIDQAEMQEWLDDTIQTIVDGQPAGHVFEIGTGTGMIMFGLGKQGLQSYVGLEPSTSATTYVNRKIKTAPTVAGKAKVYVGTAMEAAQLNGLHPEVVVINSVAQYFPTPEYLLEVVGILTQMPGVKRLFFGDIRSYATNRKFLAARALHMLGSNAKKHDIRRKMAELDEFEEELIVDPSFFTGLVSRLPGQVKHVEILPKQMIATNELSAYRYAAVVHLALPEEQHIAKIEKGAWVDFTATKMDRSALVHHLQSSSNAEIVAISNIPFSKTNFDCHLLASLDEDEEHSLDGSAWIKTIHSSAEQCPSLSATDLVEVAKEVGFRVELSWARQKSQNGALDAIFHQYQSPKEGSRVLIQFPTDDQGRSMESLTNRPLQRVQSRRIETQIRERLQAVLPSYMIPARIVVLNEMPVNANGKVDRKELTRRAKVVPRIETAAERIQPRNEVEAVLCEEFSEVLGVEVGVTDNFFDLGGHSLMATKLAARTGRRLDAKVSVKDVFDHPVLADLAAAIQRGSTPHSAIVTTEYSGPVEQSYAQGRLWFLEQLNFKATWYLLPLAVRIRGPLNIKALTTALHALEQRHETLRTTFIERDGVGKQAVQPFQPKELEIVDIAADHQGDYLKVLRDEQTTMFNLATQPGWRVTLHRVDQNTHNLSIVMHHIISDGWSVDVLRHELRQFYAAALRGQDPLAHISPLPIQYRDFSLWQKQPDQIIEHAKQLEYWTKQLADSSPAELPTDLPRPAVLSGKAGEVALSVKGPLYERLQAFCKTHQTTAFATLLAAFRATHHRLTGAEDATIGTPIANRNRPELENLIGFFVNAQCMRITIDGDETFESLIRQVRATATAAIANQDVPFERIVSTMQSTSRDTSRNPLVQLMFALHSQQDLGKIQLEGCETEPIPRAVRTRFDLEFHLYQEQGSLGGIVYFATDLFEPESIEGMVSIFKEILARALDQPQTPLALLPLTDGLAELRRRGLLEIERPSYPRESSVVDVFCSQVAASPNATAVKDSISQLTYAQLNEQSDKVAAWLHQCNLPTETLVAVLAPRSCQTVVAFLGILKANLAYLPLDVNVPAARIEAILSEVSGHILVLLGSHVSAPKIELADVEFVKIDNTVEHNLPGRIGSAPSATSLAYVIFTSGSTGKPKGVKVEHRGIVRLVKESNVVAKMPQAARIAHLSNIAFDAATWELYAALLNGGTLVCINYLTTLDSKALEAVFEQEKIQAAMLPPALLKQYLVNIPAAIGALEVVLVAGDRFDRRDAAATQALVGAGVYNAYGPTENTTLSTIYNVVQGDANVNGVPIGRPVSNSGAYIMNMNQELVPIGVIGELVVVGDGVARGYTDPALDVNRFVNVTIEGQTMRAYRTGDRARYRPKDAQIEFFGRMDQQIKIRGHRIEPAEVEHALLNNDLLQDAAVIIRKQQNDELEMVAFVEANSNKSIEQEASNQVEDWGAQFESNVYAEIEAIDASAVGNDFMGWTSMYDGSAIDKAEMQEWLDDTMQTILDGRPAGRVLEIGTGTGMILFNLGEGLQSYVGLEPSTSAAAFVNRRIQTLPAFAGKAEVHVGTATDISQLQDLRPEVVVINSVAQYFPSPEYLSKVLYALAQIPGVKRLFFGDMRSYAINDQFLAARALHNIGSKATKSAIRSKMVDLENSEEELLVDPTFFTNLATELPEVEHVEILPKRMQATNELSAYRYAAVVHIRDPARQAQTVHTIDPTAWIDFSASQMNRTALANLLQNSADAAAIAVSNIPYSKTILARHIVQSLDDDLTDSDDPQDELEGAAWMSAIRSNIKTCASLSAFDLAQLAQEKGFRVELSWARQRTHHGALDAVFHHYKSNQDGGRVLVQFPTDSRPRLSGQLTNQPLQRLQSRRLEAQIRDQLSALLPSYMIPSLIVMVDEMPLNANGKVDRKALERRARMVQKVEKPASERVGARNEIEAALCEVFVDLLGTEVSITDNFFNLGGHSLMATKLAARISRRLDARISVKDVFDYPVLADLAGAVQRGSTPHNPIVATPYSGPVEQSFAQGRLWFLDQLNAGSLWYIQPIAVRVRGSLNIGALTTALNALEKRHEPLRTTFEEHDGIGVQVVQPHQPKKLRIVDTVANYQGDFIRALRKEQQTLFNLATEPGWRVSLLRIGEDDNILSIVMHHIISDGWSVDILRQDLKLFYAAALKSQEPQVDALPIQYRDFAFWQKQPEQVAEHQRQLDYWIEQLKDSKPAELITDFPRPEVLSGTAGIVQLAVDGQVYEGLRAFCRIHQTTSFVVLLAAFRAAHYRLTGTEDATIGSPIANRNRPELESLIGFFVNTQCMRIMVGEDDTFERLVQQVRSTTTAAFANQDVPFERIVSSVQSTSRDASRNPLVQLMFALHSQQGIGLMELEGVETEPIARDVSTRFDIEFHLYQKEESLHGVVHFAADLFEPETIQGLVSVFQEILRRGLETPRLPISILPLDNNIPELLVGMLDVDTPEYPRDSSVVDVFRTQVAASPDAIAVKDSTSQLTYAQLDEESNKVATWLSQRQLAPETLVGVLAPRSCPTIVTFFGILKASLAYLPLDVNVPSARIEAILSAVPDHKLVFLGADVPDPEAPLVNVELVRIDDILRQSIHASNAGLLANHPLATSLAYVMFTSGSTGKPKGVMVEHRSIVRLVKETNLVPAVEAVSSVAHISNVAFDAATWEIYAALLNGGTTVCIDHITVLDPAKLALVFSSEKIKAAFFSTALLKQRLYEEPSTITGLDLLYAGGERMRPQDALKTRELVRGSFCHVYGPTENTTFSTVYPMGVEERCVNGLPIGRAVSHSGAVIMDANQRLVPLGVMGELVVTGDGLARGYTDPALNRDRFVEVNIHGQVLRAYRTGDQARYRPKDGQIEFSGRMDRQLKIRGHRIEPAEVEHAILSHDDIRNAVVVTRQQEGQDLEMVAFVSTPNDQTVERDEARNQVEDWGAQFESNVYAEIEEIDSSAVGNDFMGWTSMYDGTAIDKAEMQEWLDDTMRTLHDGRDPGHVLEVGTGTGMILFNLGKGLQSYVGLEPSTSAAAFVNRKIETISSLAGKAKVEIGTATDVGQLKNLRSDLVVINSVAQYFPSPEYLVEAVTALVHIPGVKRLFFGDMRSYAMNKQFLVARALRTLGAKANKDDVRRKMVELEEFEEELLVDPAFFTGLANWLSEVEHVEILPKQMTSTNELSSYRYAAIVHLRLPGQEAQPVVTVNQDAWVDFGGSKMDRHALLHHLQSSPKAETVAISNIPYSKTIYERHVLASLDDDEVEDSLDGSAWLSAVRSTAEQCASLSGVDLVQIAKEAGFRVELSWARQRSQKGGIDAVFHHYESVHDGARVMVKFPTDDQGRALDSLANRPLQRLQSRRIEVQIRERLQAVLPSYMMPVRIVVLDEMPMNANGKVDRKVLTRRAKMISRVETTAERVGPRNEIEALLCEEFAEVLGVEVGINDDFFDLGGHSLMATKLAARSSRRFDAKVSVKDVFDHPILADLAASIQRGSTPHNPILATQYSGPVEQSFAQGRLWFLEQLNVSSTWYLQPIAVRMRGPLKIEALAAAFHALEERHETLRTTFEEHDGIGMQVVQPHRPKELRVIDVQAEHDGDYTQALHTEQTTTFNLETEPGWRVSVFRLNEDDNILSIVMHHIISDGWSFDILRKEIREFYNAALKGKDPLAQMSPLHIQYRDFSVWQKQLNQITEHKRQLDYWTKNLADNTPAELPTDLPRPAVLSGKAGVIQLSITGPVYDRLRAFCRVHQTTLFTVLLTVFRATHYRLTGAEDATIGTPIANRNRPELENLIGFFVNTQCMRITVEEEDTFETLIHQVRTTTTAAFANQDVPFERIVSALLPGSRDTSRNPLSQIMFAVHSQKNISKIELDGLESEAISRATSTRFDLEFHLFQEEKGLGGIVLFAADLFEPETIDSLVFVFQEILRQSLETPKTPIAVLPLTNGIAQLRSMCVLDIEKTAYPQDSSVIDIFRQQVAARPDATAVTDSTSQLTYAQLDLHSDELASWLRQKKMAPETLVGVLAPRSCQTIVTFLGILKASLAYLPLDVKVPVARIEAILSSISGQKLILLGQDVPVPEIQLPDVDVVPISEILGRSVPSRATDKSLGPLARNLAYVLFTSGSTGKPKGVMIEHRSIVRLVKETNLISKLPNAPRTAHLTNLVFDNSAWEIYSTLLNGGTLVCIDYATVLDSKALETVFKEQRIQTSLMPPALLKECLANMPTMFDDVEVLYALGDRFDKQDAMKARSIVKTAVYNAYGPTENTVISTIYEIAKDDSFVNGVPIGRSISNSGAFIMDSRQQLVPVGVLGELVVSGDGLARGYTDPTLDVNRFVEVTVDGQHVRVYRTGDRVRFRPKDGQIEFFSRMDQQVKIRGHRIEPAEVEHVILTNKIIRDAAVAIRRPEGQEPEMVAFVTTHENTSIEKQSVEEFAARIENEVRRWIKTLLPLYMVPTQIVVLDRMPVNANGKVDRKELAQRAQTLQKSEAGSLPSVRVPPTNDMERILCEEFADVLGVEVGITDNFFDFGGHSLMATKLAARISRRVNARVSVKSVFDHPVLVDLASTIKQDSIMHKPIPQTAYTGPVEQSFAQGRLWFLDQLNFGASWYLMPLALRLQGSLHVKSLTTALFALEQRHETLRTTFEEQDGVGIQIVHPANKKDLRILDVSKEQNSDYAKVLHKERTIPIDLTSEPGWRVSLIRLGEDDHILSIVMHHIISDGWSVDVLRQELKQFYTAALKGQDPLAQIDALPIQYRDFSLWQKLPDQVAEHQRQLEYWAEQLADNTPAELLTDLPRPDVLSGKAGAVQLTIDGPVFDQLQAFCRAHQTTMFTVLLAVFRTTHYRLTGATDATIGTPIANRNRPELERLVGFFVNTQCIRITVDVEDTFEALVRQVHSTSTTAFANQDVPFERIVSTILPGSRDASRNPLAQLMFAVHSQRDISKFQLEGLDTKPIPTAASTRFDIEFHMFQQAERLSGRVLFAEDLFELETIQGMVVIFKEILRRGLETPQTPLAVLPLTDGLAHLRSQGLLEIERPEYPRDSSMIDVFRAQVAACPDAIAVKDSTSQLTYSQLDDQSDKITAWLLQRKIPAESLVAVYAPRTCQTIITFFGILKANLAYLPLDINVPAARIEAILSTISGHKLVLLGSQVSAPAVQLKDVEYVWIDEAMAETVRTCTSPEPSATSLAYVIFTSGSTGLPKGVKVEHRGVVRLVKQSNVVAKMPQAARVAHLSNIAFDAATWEIYAALLNGGSLICIDYFTTLDSKELEAVFAREKIQAAMLPPALLKQCLVNIPATISALDVVLAAGDRFDRRDAAATQALVGGCVYNAYGPTENTTLSTIYNVVKGDANVNGVPIGRPVSNSGAYIMDPNQQLVPKGVMGELIVVGDGVARGYTDPALDVNRFIEIAIDGDQAVRAYRTGDRARYRPKDGQIEFFGRMDQQIKIRGHRIEPAEVEHAVLDNSMVQDAAVITRKQDQELEMIAFVTTRSDKEIDNDEASNQVEDWGNQFESNIYAEIEEIDSSAIGKDFMGWTSMYDGSAIDKDEMQEWLDDTMSTLLDGRQPGHVLEIGTGTGMILFNLAERMGLKSYVGLDPSEKATSFVKQAIKSRPSLAGKAEVHVGTATDVARMRDLHPEVVVINSVAQYFPSPEYLADVVGALVRIPGVKRLFFGDIRSYATNNHFLAARALHKLGEKATRDTVRSKMAELEGYEEELLVDPTFFTSLTAKLHGQVEHVEILPKRMQATNELSAYRYAAIVYIRDPKRAQTVQTVKSDAWVDFSTSQMDRSVLVSLLQSSDAEAIAVSNIPYSKTIVARHIVESLSAEDSQEMLDGPAWISAVRSSAEQCASLSAIDLVQVAKENGFRVELSCARQRSHNGAIDAVFHHYKPAQEGSRVLLQFPTDNHIRAGSLTNRPLQRLESRRVETKLKEHLFSVLPSYMIPSHIVMVDQMPLNANGKVDRKALAQRAEAVLKIEKPASERVSARNEVEAVLCEEFTDVLGVEVGITDNFFDLGGHSLMATKLAARISKHLDARVSVKDVFDYPVVADLAASIERNSIPHNPIPSTNYSGPVEQSFAQGRLWFLDQLNMGVSELYLMPLALRLRGPLRVDAFAAAVSALEARHETLRTTFMDHDGVGMQVILPSNSKKLRVIDASENDYIDILRQERTAPFNLTTEPGFRIALLQLGQTDFILSIVMHHIIYDGWSIDVLCRELGRFYSAALQGQDPLAQVSPLPIQYRDFSIWQKRPEQVAEHERQLQYWTEQLADSSPAELLTDLPRPLVPTGKAGIVQLTIEGAVYERLRAFCRVHQTTSFAVLLAAFRATHYRLTGAEDATIGSPIANRNRPELESLIGFFVNTQCIRVTIREDDTFDKLVQQVRATTTAAQVNQDVPFERIVSALMPGSRDTSRNPLVQLSFALHSQHDLGRIDLQDLTGEALPTPVFTRLDVEFHLFQQAEKFGGSVLFATDLFEPETIQGLVSVFQEVLRRGLEQPQTPIAVLPLDNASEDLRSMGLLQMERTNYPRDSSVVDVFRDQVAANPRAIAVKDSVLELTYAQLDEKSDQLAAWLCQHNIPAETIVGVLAPRSCETIIAFLGILKANLAYLPLDDNVPAARIETILSAVPGHTLVLLGSHVAAPSIGLADAEFVNINHTLGHSLQLNSTCAKLQPSATSLAYVIFTSGSTGKPKGVMIEHRSIVRLVKNSNTLAKLPRAARVAHQFNLAFDAANYEIYGTLLNGGALICVDYSTLLDIDALVAMFKREKITASSLSPGLLKQCVNSAPEMLKALQVIYTGGDRLDGRDAIELQALVPGGVYNMYGPTENTVISTLYNLGDKHSYVNGVPIGTTVSNSGAYVMDALQQLVPVGVMGELVVTGDGLARGYTDPELDRNRFIKVNIDGQVVRAYRTGDRVRYRRIDGQLEFFGRMDQQIKIRGFRIETAEVENAMLSHSAVRNAAVVVPTQDIQEKGMIGFVVIENNTPKNEESKEEHLLQTELAILNRMKSILPPYMLPSRIIILDQMPSNFNGKVDRKELDRMAQSVPRQKTTAGRIVPRNELEASLCKEFAEVLGVEVGITDNFFDLGGHSLLATKLAARISRRLDTRVSVKDVFDQPVPADLALKVSSYISQGHAMDNGTLSTTNSIPFQLLHFEDSQKFIDRDIVPQLAHQSAKIVDVYPVTWIQKHFLVDPATGLPRTPSLFFVDFPANADCDKICNASRSLIQLFDIFRTVFVQAAGNFYQVVLEELDIPISVIETEDISTATRVLKEQDQQNPLQFGQGFLRFAVVKTRSAVRLVLRISHCLYDGLSFEHVVQSLHALYNGDRIPTQPKFVQYVQHLTDSRKEGYDFWLSVLEESSMTVVETGRRAQQLSSPEGAWFVEKIIKAVIPANSDGITQATVFTTASTILLARMTGSSDITFSRLVSGRQSLPINDQHIVGPCTNIVPVRIRMTDGTNARELLGMVQDQYIDSLPFETLGFDDIKENCTKWPASTTNYGCCSTFQNFEMQPQSQVQDERVRLAGLTNFKDAELLNGATATNKRVLDDVPMHEIDMIGIPEPDGLHVRVVLTASRQIFEEEVVDRMHEEFCDIILGLNKILQK</sequence>
<keyword id="KW-0413">Isomerase</keyword>
<keyword id="KW-0436">Ligase</keyword>
<keyword id="KW-0489">Methyltransferase</keyword>
<keyword id="KW-0511">Multifunctional enzyme</keyword>
<keyword id="KW-0596">Phosphopantetheine</keyword>
<keyword id="KW-0597">Phosphoprotein</keyword>
<keyword id="KW-0677">Repeat</keyword>
<keyword id="KW-0949">S-adenosyl-L-methionine</keyword>
<keyword id="KW-0808">Transferase</keyword>
<proteinExistence type="evidence at protein level"/>
<dbReference type="EC" id="2.1.1.-" evidence="3 4"/>
<dbReference type="EC" id="6.3.2.-" evidence="3 4"/>
<dbReference type="EMBL" id="LC371755">
    <property type="protein sequence ID" value="BBC83957.1"/>
    <property type="molecule type" value="Genomic_DNA"/>
</dbReference>
<dbReference type="VEuPathDB" id="FungiDB:yc1106_06630"/>
<dbReference type="GO" id="GO:0005737">
    <property type="term" value="C:cytoplasm"/>
    <property type="evidence" value="ECO:0007669"/>
    <property type="project" value="TreeGrafter"/>
</dbReference>
<dbReference type="GO" id="GO:0016853">
    <property type="term" value="F:isomerase activity"/>
    <property type="evidence" value="ECO:0007669"/>
    <property type="project" value="UniProtKB-KW"/>
</dbReference>
<dbReference type="GO" id="GO:0016874">
    <property type="term" value="F:ligase activity"/>
    <property type="evidence" value="ECO:0007669"/>
    <property type="project" value="UniProtKB-KW"/>
</dbReference>
<dbReference type="GO" id="GO:0008168">
    <property type="term" value="F:methyltransferase activity"/>
    <property type="evidence" value="ECO:0007669"/>
    <property type="project" value="UniProtKB-KW"/>
</dbReference>
<dbReference type="GO" id="GO:0031177">
    <property type="term" value="F:phosphopantetheine binding"/>
    <property type="evidence" value="ECO:0007669"/>
    <property type="project" value="InterPro"/>
</dbReference>
<dbReference type="GO" id="GO:0043041">
    <property type="term" value="P:amino acid activation for nonribosomal peptide biosynthetic process"/>
    <property type="evidence" value="ECO:0007669"/>
    <property type="project" value="TreeGrafter"/>
</dbReference>
<dbReference type="GO" id="GO:0032259">
    <property type="term" value="P:methylation"/>
    <property type="evidence" value="ECO:0007669"/>
    <property type="project" value="UniProtKB-KW"/>
</dbReference>
<dbReference type="GO" id="GO:0044550">
    <property type="term" value="P:secondary metabolite biosynthetic process"/>
    <property type="evidence" value="ECO:0007669"/>
    <property type="project" value="TreeGrafter"/>
</dbReference>
<dbReference type="CDD" id="cd05930">
    <property type="entry name" value="A_NRPS"/>
    <property type="match status" value="9"/>
</dbReference>
<dbReference type="CDD" id="cd05918">
    <property type="entry name" value="A_NRPS_SidN3_like"/>
    <property type="match status" value="1"/>
</dbReference>
<dbReference type="CDD" id="cd02440">
    <property type="entry name" value="AdoMet_MTases"/>
    <property type="match status" value="1"/>
</dbReference>
<dbReference type="CDD" id="cd19542">
    <property type="entry name" value="CT_NRPS-like"/>
    <property type="match status" value="1"/>
</dbReference>
<dbReference type="CDD" id="cd19531">
    <property type="entry name" value="LCL_NRPS-like"/>
    <property type="match status" value="9"/>
</dbReference>
<dbReference type="FunFam" id="3.30.300.30:FF:000084">
    <property type="entry name" value="Enniatin synthase"/>
    <property type="match status" value="5"/>
</dbReference>
<dbReference type="FunFam" id="3.30.559.30:FF:000001">
    <property type="entry name" value="Non-ribosomal peptide synthetase"/>
    <property type="match status" value="1"/>
</dbReference>
<dbReference type="FunFam" id="3.40.50.980:FF:000001">
    <property type="entry name" value="Non-ribosomal peptide synthetase"/>
    <property type="match status" value="1"/>
</dbReference>
<dbReference type="FunFam" id="3.30.300.30:FF:000015">
    <property type="entry name" value="Nonribosomal peptide synthase SidD"/>
    <property type="match status" value="5"/>
</dbReference>
<dbReference type="FunFam" id="1.10.1200.10:FF:000005">
    <property type="entry name" value="Nonribosomal peptide synthetase 1"/>
    <property type="match status" value="1"/>
</dbReference>
<dbReference type="Gene3D" id="3.30.300.30">
    <property type="match status" value="15"/>
</dbReference>
<dbReference type="Gene3D" id="3.40.50.980">
    <property type="match status" value="16"/>
</dbReference>
<dbReference type="Gene3D" id="1.10.1200.10">
    <property type="entry name" value="ACP-like"/>
    <property type="match status" value="9"/>
</dbReference>
<dbReference type="Gene3D" id="3.40.50.1820">
    <property type="entry name" value="alpha/beta hydrolase"/>
    <property type="match status" value="1"/>
</dbReference>
<dbReference type="Gene3D" id="3.30.559.10">
    <property type="entry name" value="Chloramphenicol acetyltransferase-like domain"/>
    <property type="match status" value="10"/>
</dbReference>
<dbReference type="Gene3D" id="2.30.38.10">
    <property type="entry name" value="Luciferase, Domain 3"/>
    <property type="match status" value="8"/>
</dbReference>
<dbReference type="Gene3D" id="3.40.50.12780">
    <property type="entry name" value="N-terminal domain of ligase-like"/>
    <property type="match status" value="2"/>
</dbReference>
<dbReference type="Gene3D" id="3.30.559.30">
    <property type="entry name" value="Nonribosomal peptide synthetase, condensation domain"/>
    <property type="match status" value="11"/>
</dbReference>
<dbReference type="Gene3D" id="3.40.50.150">
    <property type="entry name" value="Vaccinia Virus protein VP39"/>
    <property type="match status" value="5"/>
</dbReference>
<dbReference type="InterPro" id="IPR010071">
    <property type="entry name" value="AA_adenyl_dom"/>
</dbReference>
<dbReference type="InterPro" id="IPR029058">
    <property type="entry name" value="AB_hydrolase_fold"/>
</dbReference>
<dbReference type="InterPro" id="IPR036736">
    <property type="entry name" value="ACP-like_sf"/>
</dbReference>
<dbReference type="InterPro" id="IPR025110">
    <property type="entry name" value="AMP-bd_C"/>
</dbReference>
<dbReference type="InterPro" id="IPR045851">
    <property type="entry name" value="AMP-bd_C_sf"/>
</dbReference>
<dbReference type="InterPro" id="IPR020845">
    <property type="entry name" value="AMP-binding_CS"/>
</dbReference>
<dbReference type="InterPro" id="IPR000873">
    <property type="entry name" value="AMP-dep_synth/lig_dom"/>
</dbReference>
<dbReference type="InterPro" id="IPR042099">
    <property type="entry name" value="ANL_N_sf"/>
</dbReference>
<dbReference type="InterPro" id="IPR023213">
    <property type="entry name" value="CAT-like_dom_sf"/>
</dbReference>
<dbReference type="InterPro" id="IPR001242">
    <property type="entry name" value="Condensatn"/>
</dbReference>
<dbReference type="InterPro" id="IPR041698">
    <property type="entry name" value="Methyltransf_25"/>
</dbReference>
<dbReference type="InterPro" id="IPR020806">
    <property type="entry name" value="PKS_PP-bd"/>
</dbReference>
<dbReference type="InterPro" id="IPR009081">
    <property type="entry name" value="PP-bd_ACP"/>
</dbReference>
<dbReference type="InterPro" id="IPR006162">
    <property type="entry name" value="Ppantetheine_attach_site"/>
</dbReference>
<dbReference type="InterPro" id="IPR029063">
    <property type="entry name" value="SAM-dependent_MTases_sf"/>
</dbReference>
<dbReference type="NCBIfam" id="TIGR01733">
    <property type="entry name" value="AA-adenyl-dom"/>
    <property type="match status" value="9"/>
</dbReference>
<dbReference type="NCBIfam" id="NF003417">
    <property type="entry name" value="PRK04813.1"/>
    <property type="match status" value="15"/>
</dbReference>
<dbReference type="NCBIfam" id="NF004282">
    <property type="entry name" value="PRK05691.1"/>
    <property type="match status" value="19"/>
</dbReference>
<dbReference type="PANTHER" id="PTHR45527:SF1">
    <property type="entry name" value="FATTY ACID SYNTHASE"/>
    <property type="match status" value="1"/>
</dbReference>
<dbReference type="PANTHER" id="PTHR45527">
    <property type="entry name" value="NONRIBOSOMAL PEPTIDE SYNTHETASE"/>
    <property type="match status" value="1"/>
</dbReference>
<dbReference type="Pfam" id="PF00501">
    <property type="entry name" value="AMP-binding"/>
    <property type="match status" value="10"/>
</dbReference>
<dbReference type="Pfam" id="PF13193">
    <property type="entry name" value="AMP-binding_C"/>
    <property type="match status" value="3"/>
</dbReference>
<dbReference type="Pfam" id="PF00668">
    <property type="entry name" value="Condensation"/>
    <property type="match status" value="10"/>
</dbReference>
<dbReference type="Pfam" id="PF13649">
    <property type="entry name" value="Methyltransf_25"/>
    <property type="match status" value="1"/>
</dbReference>
<dbReference type="Pfam" id="PF00550">
    <property type="entry name" value="PP-binding"/>
    <property type="match status" value="10"/>
</dbReference>
<dbReference type="SMART" id="SM00823">
    <property type="entry name" value="PKS_PP"/>
    <property type="match status" value="10"/>
</dbReference>
<dbReference type="SUPFAM" id="SSF56801">
    <property type="entry name" value="Acetyl-CoA synthetase-like"/>
    <property type="match status" value="10"/>
</dbReference>
<dbReference type="SUPFAM" id="SSF47336">
    <property type="entry name" value="ACP-like"/>
    <property type="match status" value="10"/>
</dbReference>
<dbReference type="SUPFAM" id="SSF52777">
    <property type="entry name" value="CoA-dependent acyltransferases"/>
    <property type="match status" value="21"/>
</dbReference>
<dbReference type="SUPFAM" id="SSF53335">
    <property type="entry name" value="S-adenosyl-L-methionine-dependent methyltransferases"/>
    <property type="match status" value="5"/>
</dbReference>
<dbReference type="PROSITE" id="PS00455">
    <property type="entry name" value="AMP_BINDING"/>
    <property type="match status" value="10"/>
</dbReference>
<dbReference type="PROSITE" id="PS50075">
    <property type="entry name" value="CARRIER"/>
    <property type="match status" value="10"/>
</dbReference>
<dbReference type="PROSITE" id="PS00012">
    <property type="entry name" value="PHOSPHOPANTETHEINE"/>
    <property type="match status" value="6"/>
</dbReference>
<name>KK1B_CURCL</name>
<organism>
    <name type="scientific">Curvularia clavata</name>
    <dbReference type="NCBI Taxonomy" id="95742"/>
    <lineage>
        <taxon>Eukaryota</taxon>
        <taxon>Fungi</taxon>
        <taxon>Dikarya</taxon>
        <taxon>Ascomycota</taxon>
        <taxon>Pezizomycotina</taxon>
        <taxon>Dothideomycetes</taxon>
        <taxon>Pleosporomycetidae</taxon>
        <taxon>Pleosporales</taxon>
        <taxon>Pleosporineae</taxon>
        <taxon>Pleosporaceae</taxon>
        <taxon>Curvularia</taxon>
    </lineage>
</organism>
<evidence type="ECO:0000255" key="1"/>
<evidence type="ECO:0000255" key="2">
    <source>
        <dbReference type="PROSITE-ProRule" id="PRU00258"/>
    </source>
</evidence>
<evidence type="ECO:0000269" key="3">
    <source>
    </source>
</evidence>
<evidence type="ECO:0000269" key="4">
    <source>
    </source>
</evidence>
<evidence type="ECO:0000303" key="5">
    <source>
    </source>
</evidence>
<evidence type="ECO:0000303" key="6">
    <source>
    </source>
</evidence>
<evidence type="ECO:0000305" key="7"/>
<evidence type="ECO:0000305" key="8">
    <source>
    </source>
</evidence>
<evidence type="ECO:0000305" key="9">
    <source>
    </source>
</evidence>
<reference key="1">
    <citation type="journal article" date="2018" name="Front. Microbiol.">
        <title>Heterologous production of a novel cyclic peptide compound, KK-1, in Aspergillus oryzae.</title>
        <authorList>
            <person name="Yoshimi A."/>
            <person name="Yamaguchi S."/>
            <person name="Fujioka T."/>
            <person name="Kawai K."/>
            <person name="Gomi K."/>
            <person name="Machida M."/>
            <person name="Abe K."/>
        </authorList>
    </citation>
    <scope>NUCLEOTIDE SEQUENCE [GENOMIC DNA]</scope>
    <scope>FUNCTION</scope>
    <scope>CATALYTIC ACTIVITY</scope>
    <scope>PATHWAY</scope>
    <source>
        <strain>BAUA-2787</strain>
    </source>
</reference>
<reference key="2">
    <citation type="journal article" date="2022" name="Front. Fungal Biol.">
        <title>Discovery of a gene cluster for the biosynthesis of novel cyclic peptide compound, KK-1, in Curvularia clavata.</title>
        <authorList>
            <person name="Yamaguchi S."/>
            <person name="Fujioka T."/>
            <person name="Yoshimi A."/>
            <person name="Kumagai T."/>
            <person name="Umemura M."/>
            <person name="Abe K."/>
            <person name="Machida M."/>
            <person name="Kawai K."/>
        </authorList>
    </citation>
    <scope>FUNCTION</scope>
    <scope>INDUCTION</scope>
    <scope>DOMAIN</scope>
    <scope>DISRUPTION PHENOTYPE</scope>
    <scope>CATALYTIC ACTIVITY</scope>
    <scope>PATHWAY</scope>
</reference>
<gene>
    <name evidence="6" type="primary">kk1B</name>
    <name evidence="5" type="synonym">NRPS</name>
    <name type="ORF">TRAF135001</name>
</gene>
<comment type="function">
    <text evidence="3 4 9">Nonribosomal peptide synthetase; part of the gene cluster that mediates the biosynthesis of KK-1, a novel cyclic depsipeptide with 10 residues which is a promising active compound with high activity against many plant pathogens, especially Botrytis cinerea (PubMed:29686660, PubMed:37746209). The nonribosomal peptide synthetase (NRPS) kk1B catalyzes the elongation and cyclization of the decapeptide chain composed of 1 D-lactic acid residue (D-Lac), 1 pipecolic acid residue (Pip), 1 aspartic acid residue (Asp), 1 isoleucine residue (Ile), 1 glycine residue (Gly), 1 tyrosine residue (Tyr) and 4 valine residues (Val) (PubMed:29686660, PubMed:37746209). The Asp, Ile and 3 Val residues are N-methylated by the 5 methyltransferase domains from the NRPS (found in modules 3, 5, 6, 7 and 9), whereas the Tyr residue is O-methylated by the cluster encoded O-methyltransferase kk1A (PubMed:29686660, PubMed:37746209). Cyclization with the hydroxy group of the D-lactic acid as a nucleophile is presumed to occur in the final module of NRPS, resulting in the formation of the depsipeptide ester bond through macrocyclization by the C-terminal C domain (Probable). The thioesterase kk1J is likely to be involved in the corrective mechanism of peptide chain synthesis. The D-lactate dehydrogenase kk1H is involved in the synthesis of D-lactic acid from pyruvic acid, which is recognized by the A domain of the first kk1B module. The pyrroline-5-carboxylate reductase kk1I is involved in the synthesis of the L-pipecolic acid residue of KK-1 from delta-1-pyrroline-5-carboxylate (P5C), a metabolic intermediate of lysine. It is still unclear how kk1C and kk1D are involved in the production of KK-1 (Probable).</text>
</comment>
<comment type="pathway">
    <text evidence="3 4">Secondary metabolite biosynthesis.</text>
</comment>
<comment type="induction">
    <text evidence="4">Expression is positively regulated by the KK-1 cluster-specific transcription factor kk1F.</text>
</comment>
<comment type="domain">
    <text evidence="8 9">NRP synthetases are composed of discrete domains (adenylation (A), thiolation (T) or peptidyl carrier protein (PCP) and condensation (C) domains) which when grouped together are referred to as a single module. Each module is responsible for the recognition (via the A domain) and incorporation of a single amino acid into the growing peptide product. Thus, an NRP synthetase is generally composed of one or more modules and can terminate in a thioesterase domain (TE) that releases the newly synthesized peptide from the enzyme. Occasionally, methyltransferase domains (responsible for amino acid methylation) are present within the NRP synthetaseTES has the following 10 modules architecture: A1-T1-C1-A2-T2-C2-A3-M3-T3-C3-A4-T4-C4-A5-M5-T5-C5-A6-M6-T6-C6-A7-M7-T7-C7-A8-T8-C8-A9-M9-T9-C9-A10-T10-C10.</text>
</comment>
<comment type="disruption phenotype">
    <text evidence="4">Abolishes completely the production of KK-1.</text>
</comment>
<comment type="similarity">
    <text evidence="7">Belongs to the NRP synthetase family.</text>
</comment>
<protein>
    <recommendedName>
        <fullName evidence="6">Nonribosomal peptide synthetase kk1B</fullName>
        <shortName evidence="6">NRPS kk1B</shortName>
        <ecNumber evidence="3 4">2.1.1.-</ecNumber>
        <ecNumber evidence="3 4">6.3.2.-</ecNumber>
    </recommendedName>
    <alternativeName>
        <fullName evidence="6">KK-1 biosynthesis cluster protein B</fullName>
    </alternativeName>
</protein>
<feature type="chain" id="PRO_0000450430" description="Nonribosomal peptide synthetase kk1B">
    <location>
        <begin position="1"/>
        <end position="13041"/>
    </location>
</feature>
<feature type="domain" description="Carrier 1" evidence="2">
    <location>
        <begin position="788"/>
        <end position="864"/>
    </location>
</feature>
<feature type="domain" description="Carrier 2" evidence="2">
    <location>
        <begin position="1865"/>
        <end position="1939"/>
    </location>
</feature>
<feature type="domain" description="Carrier 3" evidence="2">
    <location>
        <begin position="3353"/>
        <end position="3427"/>
    </location>
</feature>
<feature type="domain" description="Carrier 4" evidence="2">
    <location>
        <begin position="4412"/>
        <end position="4486"/>
    </location>
</feature>
<feature type="domain" description="Carrier 5" evidence="2">
    <location>
        <begin position="5897"/>
        <end position="5971"/>
    </location>
</feature>
<feature type="domain" description="Carrier 6" evidence="2">
    <location>
        <begin position="7386"/>
        <end position="7460"/>
    </location>
</feature>
<feature type="domain" description="Carrier 7" evidence="2">
    <location>
        <begin position="8871"/>
        <end position="8945"/>
    </location>
</feature>
<feature type="domain" description="Carrier 8" evidence="2">
    <location>
        <begin position="9943"/>
        <end position="10017"/>
    </location>
</feature>
<feature type="domain" description="Carrier 9" evidence="2">
    <location>
        <begin position="11428"/>
        <end position="11502"/>
    </location>
</feature>
<feature type="domain" description="Carrier 10" evidence="2">
    <location>
        <begin position="12495"/>
        <end position="12569"/>
    </location>
</feature>
<feature type="region of interest" description="Adenylation 1" evidence="1 8">
    <location>
        <begin position="267"/>
        <end position="663"/>
    </location>
</feature>
<feature type="region of interest" description="Condensation 1" evidence="1 8">
    <location>
        <begin position="882"/>
        <end position="1313"/>
    </location>
</feature>
<feature type="region of interest" description="Adenylation 2" evidence="1 8">
    <location>
        <begin position="1341"/>
        <end position="1736"/>
    </location>
</feature>
<feature type="region of interest" description="Condensation 2" evidence="1 8">
    <location>
        <begin position="1957"/>
        <end position="2383"/>
    </location>
</feature>
<feature type="region of interest" description="Adenylation 3" evidence="1 8">
    <location>
        <begin position="2418"/>
        <end position="2812"/>
    </location>
</feature>
<feature type="region of interest" description="Methyltransferase (M) domain 1" evidence="1 8">
    <location>
        <begin position="2891"/>
        <end position="3023"/>
    </location>
</feature>
<feature type="region of interest" description="Condensation 3" evidence="1 8">
    <location>
        <begin position="3445"/>
        <end position="3869"/>
    </location>
</feature>
<feature type="region of interest" description="Adenylation 4" evidence="1 8">
    <location>
        <begin position="3901"/>
        <end position="4300"/>
    </location>
</feature>
<feature type="region of interest" description="Condensation 4" evidence="1 8">
    <location>
        <begin position="4504"/>
        <end position="4935"/>
    </location>
</feature>
<feature type="region of interest" description="Adenylation 5" evidence="1 8">
    <location>
        <begin position="4963"/>
        <end position="5362"/>
    </location>
</feature>
<feature type="region of interest" description="Methyltransferase (M) domain 2" evidence="1 8">
    <location>
        <begin position="5430"/>
        <end position="5567"/>
    </location>
</feature>
<feature type="region of interest" description="Condensation 5" evidence="1 8">
    <location>
        <begin position="5989"/>
        <end position="6416"/>
    </location>
</feature>
<feature type="region of interest" description="Adenylation 6" evidence="1 8">
    <location>
        <begin position="6451"/>
        <end position="6845"/>
    </location>
</feature>
<feature type="region of interest" description="Methyltransferase (M) domain 3" evidence="1 8">
    <location>
        <begin position="6924"/>
        <end position="7056"/>
    </location>
</feature>
<feature type="region of interest" description="Condensation 6" evidence="1 8">
    <location>
        <begin position="7478"/>
        <end position="7901"/>
    </location>
</feature>
<feature type="region of interest" description="Adenylation 7" evidence="1 8">
    <location>
        <begin position="7934"/>
        <end position="8335"/>
    </location>
</feature>
<feature type="region of interest" description="Methyltransferase (M) domain 4" evidence="1 8">
    <location>
        <begin position="8404"/>
        <end position="8540"/>
    </location>
</feature>
<feature type="region of interest" description="Condensation 7" evidence="1 8">
    <location>
        <begin position="8963"/>
        <end position="9392"/>
    </location>
</feature>
<feature type="region of interest" description="Adenylation 8" evidence="1 8">
    <location>
        <begin position="9422"/>
        <end position="9822"/>
    </location>
</feature>
<feature type="region of interest" description="Condensation 8" evidence="1 8">
    <location>
        <begin position="10035"/>
        <end position="10462"/>
    </location>
</feature>
<feature type="region of interest" description="Adenylation 9" evidence="1 8">
    <location>
        <begin position="10494"/>
        <end position="10892"/>
    </location>
</feature>
<feature type="region of interest" description="Methyltransferase (M) domain 5" evidence="1 8">
    <location>
        <begin position="10959"/>
        <end position="11105"/>
    </location>
</feature>
<feature type="region of interest" description="Condensation 9" evidence="1 8">
    <location>
        <begin position="11520"/>
        <end position="11945"/>
    </location>
</feature>
<feature type="region of interest" description="Adenylation 10" evidence="1 8">
    <location>
        <begin position="11977"/>
        <end position="12377"/>
    </location>
</feature>
<feature type="region of interest" description="Condensation 10" evidence="1 8">
    <location>
        <begin position="12647"/>
        <end position="13032"/>
    </location>
</feature>
<feature type="modified residue" description="O-(pantetheine 4'-phosphoryl)serine" evidence="2">
    <location>
        <position position="825"/>
    </location>
</feature>
<feature type="modified residue" description="O-(pantetheine 4'-phosphoryl)serine" evidence="2">
    <location>
        <position position="1899"/>
    </location>
</feature>
<feature type="modified residue" description="O-(pantetheine 4'-phosphoryl)serine" evidence="2">
    <location>
        <position position="3387"/>
    </location>
</feature>
<feature type="modified residue" description="O-(pantetheine 4'-phosphoryl)serine" evidence="2">
    <location>
        <position position="4446"/>
    </location>
</feature>
<feature type="modified residue" description="O-(pantetheine 4'-phosphoryl)serine" evidence="2">
    <location>
        <position position="5931"/>
    </location>
</feature>
<feature type="modified residue" description="O-(pantetheine 4'-phosphoryl)serine" evidence="2">
    <location>
        <position position="7420"/>
    </location>
</feature>
<feature type="modified residue" description="O-(pantetheine 4'-phosphoryl)serine" evidence="2">
    <location>
        <position position="8905"/>
    </location>
</feature>
<feature type="modified residue" description="O-(pantetheine 4'-phosphoryl)serine" evidence="2">
    <location>
        <position position="9977"/>
    </location>
</feature>
<feature type="modified residue" description="O-(pantetheine 4'-phosphoryl)serine" evidence="2">
    <location>
        <position position="11462"/>
    </location>
</feature>
<feature type="modified residue" description="O-(pantetheine 4'-phosphoryl)serine" evidence="2">
    <location>
        <position position="12529"/>
    </location>
</feature>